<protein>
    <recommendedName>
        <fullName evidence="1">3-phosphoshikimate 1-carboxyvinyltransferase</fullName>
        <ecNumber evidence="1">2.5.1.19</ecNumber>
    </recommendedName>
    <alternativeName>
        <fullName evidence="1">5-enolpyruvylshikimate-3-phosphate synthase</fullName>
        <shortName evidence="1">EPSP synthase</shortName>
        <shortName evidence="1">EPSPS</shortName>
    </alternativeName>
</protein>
<evidence type="ECO:0000255" key="1">
    <source>
        <dbReference type="HAMAP-Rule" id="MF_00210"/>
    </source>
</evidence>
<reference key="1">
    <citation type="submission" date="2006-12" db="EMBL/GenBank/DDBJ databases">
        <title>Complete sequence of Shewanella sp. W3-18-1.</title>
        <authorList>
            <consortium name="US DOE Joint Genome Institute"/>
            <person name="Copeland A."/>
            <person name="Lucas S."/>
            <person name="Lapidus A."/>
            <person name="Barry K."/>
            <person name="Detter J.C."/>
            <person name="Glavina del Rio T."/>
            <person name="Hammon N."/>
            <person name="Israni S."/>
            <person name="Dalin E."/>
            <person name="Tice H."/>
            <person name="Pitluck S."/>
            <person name="Chain P."/>
            <person name="Malfatti S."/>
            <person name="Shin M."/>
            <person name="Vergez L."/>
            <person name="Schmutz J."/>
            <person name="Larimer F."/>
            <person name="Land M."/>
            <person name="Hauser L."/>
            <person name="Kyrpides N."/>
            <person name="Lykidis A."/>
            <person name="Tiedje J."/>
            <person name="Richardson P."/>
        </authorList>
    </citation>
    <scope>NUCLEOTIDE SEQUENCE [LARGE SCALE GENOMIC DNA]</scope>
    <source>
        <strain>W3-18-1</strain>
    </source>
</reference>
<accession>A1RJF8</accession>
<keyword id="KW-0028">Amino-acid biosynthesis</keyword>
<keyword id="KW-0057">Aromatic amino acid biosynthesis</keyword>
<keyword id="KW-0963">Cytoplasm</keyword>
<keyword id="KW-0808">Transferase</keyword>
<feature type="chain" id="PRO_1000012477" description="3-phosphoshikimate 1-carboxyvinyltransferase">
    <location>
        <begin position="1"/>
        <end position="426"/>
    </location>
</feature>
<feature type="active site" description="Proton acceptor" evidence="1">
    <location>
        <position position="314"/>
    </location>
</feature>
<feature type="binding site" evidence="1">
    <location>
        <position position="22"/>
    </location>
    <ligand>
        <name>3-phosphoshikimate</name>
        <dbReference type="ChEBI" id="CHEBI:145989"/>
    </ligand>
</feature>
<feature type="binding site" evidence="1">
    <location>
        <position position="22"/>
    </location>
    <ligand>
        <name>phosphoenolpyruvate</name>
        <dbReference type="ChEBI" id="CHEBI:58702"/>
    </ligand>
</feature>
<feature type="binding site" evidence="1">
    <location>
        <position position="23"/>
    </location>
    <ligand>
        <name>3-phosphoshikimate</name>
        <dbReference type="ChEBI" id="CHEBI:145989"/>
    </ligand>
</feature>
<feature type="binding site" evidence="1">
    <location>
        <position position="27"/>
    </location>
    <ligand>
        <name>3-phosphoshikimate</name>
        <dbReference type="ChEBI" id="CHEBI:145989"/>
    </ligand>
</feature>
<feature type="binding site" evidence="1">
    <location>
        <position position="96"/>
    </location>
    <ligand>
        <name>phosphoenolpyruvate</name>
        <dbReference type="ChEBI" id="CHEBI:58702"/>
    </ligand>
</feature>
<feature type="binding site" evidence="1">
    <location>
        <position position="124"/>
    </location>
    <ligand>
        <name>phosphoenolpyruvate</name>
        <dbReference type="ChEBI" id="CHEBI:58702"/>
    </ligand>
</feature>
<feature type="binding site" evidence="1">
    <location>
        <position position="170"/>
    </location>
    <ligand>
        <name>3-phosphoshikimate</name>
        <dbReference type="ChEBI" id="CHEBI:145989"/>
    </ligand>
</feature>
<feature type="binding site" evidence="1">
    <location>
        <position position="171"/>
    </location>
    <ligand>
        <name>3-phosphoshikimate</name>
        <dbReference type="ChEBI" id="CHEBI:145989"/>
    </ligand>
</feature>
<feature type="binding site" evidence="1">
    <location>
        <position position="172"/>
    </location>
    <ligand>
        <name>3-phosphoshikimate</name>
        <dbReference type="ChEBI" id="CHEBI:145989"/>
    </ligand>
</feature>
<feature type="binding site" evidence="1">
    <location>
        <position position="172"/>
    </location>
    <ligand>
        <name>phosphoenolpyruvate</name>
        <dbReference type="ChEBI" id="CHEBI:58702"/>
    </ligand>
</feature>
<feature type="binding site" evidence="1">
    <location>
        <position position="198"/>
    </location>
    <ligand>
        <name>3-phosphoshikimate</name>
        <dbReference type="ChEBI" id="CHEBI:145989"/>
    </ligand>
</feature>
<feature type="binding site" evidence="1">
    <location>
        <position position="314"/>
    </location>
    <ligand>
        <name>3-phosphoshikimate</name>
        <dbReference type="ChEBI" id="CHEBI:145989"/>
    </ligand>
</feature>
<feature type="binding site" evidence="1">
    <location>
        <position position="337"/>
    </location>
    <ligand>
        <name>3-phosphoshikimate</name>
        <dbReference type="ChEBI" id="CHEBI:145989"/>
    </ligand>
</feature>
<feature type="binding site" evidence="1">
    <location>
        <position position="341"/>
    </location>
    <ligand>
        <name>3-phosphoshikimate</name>
        <dbReference type="ChEBI" id="CHEBI:145989"/>
    </ligand>
</feature>
<feature type="binding site" evidence="1">
    <location>
        <position position="345"/>
    </location>
    <ligand>
        <name>phosphoenolpyruvate</name>
        <dbReference type="ChEBI" id="CHEBI:58702"/>
    </ligand>
</feature>
<feature type="binding site" evidence="1">
    <location>
        <position position="387"/>
    </location>
    <ligand>
        <name>phosphoenolpyruvate</name>
        <dbReference type="ChEBI" id="CHEBI:58702"/>
    </ligand>
</feature>
<feature type="binding site" evidence="1">
    <location>
        <position position="412"/>
    </location>
    <ligand>
        <name>phosphoenolpyruvate</name>
        <dbReference type="ChEBI" id="CHEBI:58702"/>
    </ligand>
</feature>
<dbReference type="EC" id="2.5.1.19" evidence="1"/>
<dbReference type="EMBL" id="CP000503">
    <property type="protein sequence ID" value="ABM24803.1"/>
    <property type="molecule type" value="Genomic_DNA"/>
</dbReference>
<dbReference type="RefSeq" id="WP_011789294.1">
    <property type="nucleotide sequence ID" value="NC_008750.1"/>
</dbReference>
<dbReference type="SMR" id="A1RJF8"/>
<dbReference type="KEGG" id="shw:Sputw3181_1969"/>
<dbReference type="HOGENOM" id="CLU_024321_0_0_6"/>
<dbReference type="UniPathway" id="UPA00053">
    <property type="reaction ID" value="UER00089"/>
</dbReference>
<dbReference type="Proteomes" id="UP000002597">
    <property type="component" value="Chromosome"/>
</dbReference>
<dbReference type="GO" id="GO:0005737">
    <property type="term" value="C:cytoplasm"/>
    <property type="evidence" value="ECO:0007669"/>
    <property type="project" value="UniProtKB-SubCell"/>
</dbReference>
<dbReference type="GO" id="GO:0003866">
    <property type="term" value="F:3-phosphoshikimate 1-carboxyvinyltransferase activity"/>
    <property type="evidence" value="ECO:0007669"/>
    <property type="project" value="UniProtKB-UniRule"/>
</dbReference>
<dbReference type="GO" id="GO:0008652">
    <property type="term" value="P:amino acid biosynthetic process"/>
    <property type="evidence" value="ECO:0007669"/>
    <property type="project" value="UniProtKB-KW"/>
</dbReference>
<dbReference type="GO" id="GO:0009073">
    <property type="term" value="P:aromatic amino acid family biosynthetic process"/>
    <property type="evidence" value="ECO:0007669"/>
    <property type="project" value="UniProtKB-KW"/>
</dbReference>
<dbReference type="GO" id="GO:0009423">
    <property type="term" value="P:chorismate biosynthetic process"/>
    <property type="evidence" value="ECO:0007669"/>
    <property type="project" value="UniProtKB-UniRule"/>
</dbReference>
<dbReference type="CDD" id="cd01556">
    <property type="entry name" value="EPSP_synthase"/>
    <property type="match status" value="1"/>
</dbReference>
<dbReference type="FunFam" id="3.65.10.10:FF:000003">
    <property type="entry name" value="3-phosphoshikimate 1-carboxyvinyltransferase"/>
    <property type="match status" value="1"/>
</dbReference>
<dbReference type="FunFam" id="3.65.10.10:FF:000004">
    <property type="entry name" value="3-phosphoshikimate 1-carboxyvinyltransferase"/>
    <property type="match status" value="1"/>
</dbReference>
<dbReference type="Gene3D" id="3.65.10.10">
    <property type="entry name" value="Enolpyruvate transferase domain"/>
    <property type="match status" value="2"/>
</dbReference>
<dbReference type="HAMAP" id="MF_00210">
    <property type="entry name" value="EPSP_synth"/>
    <property type="match status" value="1"/>
</dbReference>
<dbReference type="InterPro" id="IPR001986">
    <property type="entry name" value="Enolpyruvate_Tfrase_dom"/>
</dbReference>
<dbReference type="InterPro" id="IPR036968">
    <property type="entry name" value="Enolpyruvate_Tfrase_sf"/>
</dbReference>
<dbReference type="InterPro" id="IPR006264">
    <property type="entry name" value="EPSP_synthase"/>
</dbReference>
<dbReference type="InterPro" id="IPR023193">
    <property type="entry name" value="EPSP_synthase_CS"/>
</dbReference>
<dbReference type="InterPro" id="IPR013792">
    <property type="entry name" value="RNA3'P_cycl/enolpyr_Trfase_a/b"/>
</dbReference>
<dbReference type="NCBIfam" id="TIGR01356">
    <property type="entry name" value="aroA"/>
    <property type="match status" value="1"/>
</dbReference>
<dbReference type="PANTHER" id="PTHR21090">
    <property type="entry name" value="AROM/DEHYDROQUINATE SYNTHASE"/>
    <property type="match status" value="1"/>
</dbReference>
<dbReference type="PANTHER" id="PTHR21090:SF5">
    <property type="entry name" value="PENTAFUNCTIONAL AROM POLYPEPTIDE"/>
    <property type="match status" value="1"/>
</dbReference>
<dbReference type="Pfam" id="PF00275">
    <property type="entry name" value="EPSP_synthase"/>
    <property type="match status" value="1"/>
</dbReference>
<dbReference type="PIRSF" id="PIRSF000505">
    <property type="entry name" value="EPSPS"/>
    <property type="match status" value="1"/>
</dbReference>
<dbReference type="SUPFAM" id="SSF55205">
    <property type="entry name" value="EPT/RTPC-like"/>
    <property type="match status" value="1"/>
</dbReference>
<dbReference type="PROSITE" id="PS00104">
    <property type="entry name" value="EPSP_SYNTHASE_1"/>
    <property type="match status" value="1"/>
</dbReference>
<dbReference type="PROSITE" id="PS00885">
    <property type="entry name" value="EPSP_SYNTHASE_2"/>
    <property type="match status" value="1"/>
</dbReference>
<sequence>MKQLRLEPVVQVRGEINIPGSKSISNRALLLATLAQGTTTLTNLLDSDDIRHMLASLKQLGVNYRLSQNNTVCELDGLGGVISSASAQELFLGNAGTAMRPLCAALTLGQGEFTLTGEPRMEERPIGDLVDALRKLGANVVYLKNDGFPPLTINATGLNGGDVEIAGDLSSQFLTALLMVAPLAKGSVNIHVKGELVSKPYIDITIALMAQFGVNVINHDYARFEIVAGQRYISPCKVLVEGDASSASYFLAAGAIKGGEVKVTGVGRLSIQGDVKFADVLEKMGADIEWGDDYIIARGSPLTAVDLDMNHIPDAAMTIATAALFAKGTTVIRNIYNWRIKETDRLAAMATELRKVGAEVEEGNDYIKITPPAVINTAEIDTYNDHRMAMCFSMLAFADCGITINDPDCTSKTFPDYFKQFASLQG</sequence>
<gene>
    <name evidence="1" type="primary">aroA</name>
    <name type="ordered locus">Sputw3181_1969</name>
</gene>
<proteinExistence type="inferred from homology"/>
<name>AROA_SHESW</name>
<organism>
    <name type="scientific">Shewanella sp. (strain W3-18-1)</name>
    <dbReference type="NCBI Taxonomy" id="351745"/>
    <lineage>
        <taxon>Bacteria</taxon>
        <taxon>Pseudomonadati</taxon>
        <taxon>Pseudomonadota</taxon>
        <taxon>Gammaproteobacteria</taxon>
        <taxon>Alteromonadales</taxon>
        <taxon>Shewanellaceae</taxon>
        <taxon>Shewanella</taxon>
    </lineage>
</organism>
<comment type="function">
    <text evidence="1">Catalyzes the transfer of the enolpyruvyl moiety of phosphoenolpyruvate (PEP) to the 5-hydroxyl of shikimate-3-phosphate (S3P) to produce enolpyruvyl shikimate-3-phosphate and inorganic phosphate.</text>
</comment>
<comment type="catalytic activity">
    <reaction evidence="1">
        <text>3-phosphoshikimate + phosphoenolpyruvate = 5-O-(1-carboxyvinyl)-3-phosphoshikimate + phosphate</text>
        <dbReference type="Rhea" id="RHEA:21256"/>
        <dbReference type="ChEBI" id="CHEBI:43474"/>
        <dbReference type="ChEBI" id="CHEBI:57701"/>
        <dbReference type="ChEBI" id="CHEBI:58702"/>
        <dbReference type="ChEBI" id="CHEBI:145989"/>
        <dbReference type="EC" id="2.5.1.19"/>
    </reaction>
    <physiologicalReaction direction="left-to-right" evidence="1">
        <dbReference type="Rhea" id="RHEA:21257"/>
    </physiologicalReaction>
</comment>
<comment type="pathway">
    <text evidence="1">Metabolic intermediate biosynthesis; chorismate biosynthesis; chorismate from D-erythrose 4-phosphate and phosphoenolpyruvate: step 6/7.</text>
</comment>
<comment type="subunit">
    <text evidence="1">Monomer.</text>
</comment>
<comment type="subcellular location">
    <subcellularLocation>
        <location evidence="1">Cytoplasm</location>
    </subcellularLocation>
</comment>
<comment type="similarity">
    <text evidence="1">Belongs to the EPSP synthase family.</text>
</comment>